<gene>
    <name evidence="6" type="primary">hpdB</name>
    <name type="ordered locus">CD196_0165</name>
</gene>
<evidence type="ECO:0000250" key="1">
    <source>
        <dbReference type="UniProtKB" id="Q38HX4"/>
    </source>
</evidence>
<evidence type="ECO:0000250" key="2">
    <source>
        <dbReference type="UniProtKB" id="Q84F16"/>
    </source>
</evidence>
<evidence type="ECO:0000255" key="3">
    <source>
        <dbReference type="PROSITE-ProRule" id="PRU00493"/>
    </source>
</evidence>
<evidence type="ECO:0000255" key="4">
    <source>
        <dbReference type="PROSITE-ProRule" id="PRU00887"/>
    </source>
</evidence>
<evidence type="ECO:0000305" key="5"/>
<evidence type="ECO:0000312" key="6">
    <source>
        <dbReference type="EMBL" id="CBA60343.1"/>
    </source>
</evidence>
<proteinExistence type="inferred from homology"/>
<sequence length="902" mass="101268">MSQSKEDKIRSILEAKNIKSNFQNKENLSEFNEKKASKRAEDLLDVYYNTLSTADMEFPYWYNREYRKSDGDIPVVRRAKALKAAFSHMTPNIIPGEKIVMQKTRHYRGSFPMPWVSESFFVAQGEQMREEAKKLASNTADELTKFGSGGGNVTESFGNVVSIAGKFGMRKEEVPVLVKMAKEWVGKSVEDLGFHYEKMMPDYDLKENLMSTLICMFDSGYTLPQGREVINYFYPLNYGLDGIIEMAKECKKAVAGNASGDGLIGMDRLYFYEAVIQVIEGLQTWILNYAKHAKYLESIETDLEAKKEYSDLVEILEHIAHKQPRTFREALQLTYTIHIASVNEDAISGMSIGRFGQILYPWYEQDIEKGLITKEEVIELLELYRIKITCIDCFASAGVNGGVLSGNTFNTLSIGGLKEDGSTGANELEELLLEASMRCRTPQPSLTMLYDEKLPEDFLMKAAECTKLGSGYPAWVNNSNGTTFMMKQFADEGMTVEEARAFALGGCLETSPGCWKQLTLNGKTYSIAGGAGQSAGSGVHFIANPKILELVLMNGKDHRMNIQVFEPHNKPLDTYEEVIEVFKDYYKQAINVLERANNIELDIWRKFDTSIINSLLKPDCLDKGQHIGNMGYRYNATLNVETCGTVTMVNSFAALKKLVYDDKAFTIEEMKDAILNNFGFKDALEVGNYSMADQVKVDKTGKYDAIYKACLDAPKYGNNDLYADNILKNYEVWLSKVCEEAQSLYAKKMYPCQISVSTHGPQGAATLATPDGRLSGTTYSDGSVSAYAGTDKNGVYALFESATIWDQAVVQNSQMNLKLHPTTIKGQQGTKKLLDLTRSYLRKGGFHIQYNVVDSETLKDAQKNPDNYRQLMVRVAGFTQYWCELGKPIQDEVIARTEYEGV</sequence>
<organism>
    <name type="scientific">Clostridioides difficile (strain CD196)</name>
    <name type="common">Peptoclostridium difficile</name>
    <dbReference type="NCBI Taxonomy" id="645462"/>
    <lineage>
        <taxon>Bacteria</taxon>
        <taxon>Bacillati</taxon>
        <taxon>Bacillota</taxon>
        <taxon>Clostridia</taxon>
        <taxon>Peptostreptococcales</taxon>
        <taxon>Peptostreptococcaceae</taxon>
        <taxon>Clostridioides</taxon>
    </lineage>
</organism>
<name>HPDL_CLODC</name>
<comment type="function">
    <text evidence="1">Glycyl radical subunit of the HPA decarboxylase that decarboxylates phenylacetates with a hydroxyl group in the p-position. Active toward 4-hydroxyphenylacetate and 3,4-dihydroxyphenylacetate, forming 4-methylphenol and 4-methylcatechol, respectively. Is likely involved in the catabolism of aromatic amino acids such as tyrosine fermentation. 4-methylphenol (p-cresol) formation provides metabolic toxicity, which allows an active suppression of other microbes and may provide growth advantages for the producers in highly competitive environments. The large subunit is the catalytic subunit that binds the substrate.</text>
</comment>
<comment type="catalytic activity">
    <reaction evidence="1">
        <text>4-hydroxyphenylacetate + H(+) = 4-methylphenol + CO2</text>
        <dbReference type="Rhea" id="RHEA:22732"/>
        <dbReference type="ChEBI" id="CHEBI:15378"/>
        <dbReference type="ChEBI" id="CHEBI:16526"/>
        <dbReference type="ChEBI" id="CHEBI:17847"/>
        <dbReference type="ChEBI" id="CHEBI:48999"/>
        <dbReference type="EC" id="4.1.1.83"/>
    </reaction>
    <physiologicalReaction direction="left-to-right" evidence="1">
        <dbReference type="Rhea" id="RHEA:22733"/>
    </physiologicalReaction>
</comment>
<comment type="catalytic activity">
    <reaction evidence="1">
        <text>3,4-dihydroxyphenylacetate + H(+) = 4-methylcatechol + CO2</text>
        <dbReference type="Rhea" id="RHEA:62556"/>
        <dbReference type="ChEBI" id="CHEBI:15378"/>
        <dbReference type="ChEBI" id="CHEBI:16526"/>
        <dbReference type="ChEBI" id="CHEBI:17254"/>
        <dbReference type="ChEBI" id="CHEBI:17612"/>
        <dbReference type="EC" id="4.1.1.83"/>
    </reaction>
    <physiologicalReaction direction="left-to-right" evidence="1">
        <dbReference type="Rhea" id="RHEA:62557"/>
    </physiologicalReaction>
</comment>
<comment type="subunit">
    <text evidence="1">Heterooctamer consisting of 4 large (HpdB) subunits and 4 small (HpdC) subunits, arranged as a tetramer of heterodimers. Also forms a catalytically inactive homodimer.</text>
</comment>
<comment type="PTM">
    <text evidence="1">Requires the activating protein CsdA to generate the key active site glycyl radical that is involved in catalysis.</text>
</comment>
<comment type="PTM">
    <text evidence="1">Phosphorylated on serine. Phosphorylation may trigger the formation of the active heterooctamers and thereby regulates enzyme activity.</text>
</comment>
<comment type="similarity">
    <text evidence="5">Belongs to the glycyl radical enzyme (GRE) family. HPAD subfamily.</text>
</comment>
<accession>C9XIS5</accession>
<feature type="initiator methionine" description="Removed" evidence="2">
    <location>
        <position position="1"/>
    </location>
</feature>
<feature type="chain" id="PRO_0000403689" description="4-hydroxyphenylacetate decarboxylase glycyl radical subunit" evidence="2">
    <location>
        <begin position="2"/>
        <end position="902"/>
    </location>
</feature>
<feature type="domain" description="PFL" evidence="4">
    <location>
        <begin position="38"/>
        <end position="774"/>
    </location>
</feature>
<feature type="domain" description="Glycine radical" evidence="3">
    <location>
        <begin position="782"/>
        <end position="902"/>
    </location>
</feature>
<feature type="active site" description="Cysteine radical intermediate" evidence="1">
    <location>
        <position position="507"/>
    </location>
</feature>
<feature type="active site" description="Proton donor" evidence="1">
    <location>
        <position position="509"/>
    </location>
</feature>
<feature type="binding site" evidence="1">
    <location>
        <position position="348"/>
    </location>
    <ligand>
        <name>4-hydroxyphenylacetate</name>
        <dbReference type="ChEBI" id="CHEBI:48999"/>
    </ligand>
</feature>
<feature type="binding site" evidence="1">
    <location>
        <position position="507"/>
    </location>
    <ligand>
        <name>4-hydroxyphenylacetate</name>
        <dbReference type="ChEBI" id="CHEBI:48999"/>
    </ligand>
</feature>
<feature type="binding site" evidence="1">
    <location>
        <position position="540"/>
    </location>
    <ligand>
        <name>4-hydroxyphenylacetate</name>
        <dbReference type="ChEBI" id="CHEBI:48999"/>
    </ligand>
</feature>
<feature type="binding site" evidence="1">
    <location>
        <position position="641"/>
    </location>
    <ligand>
        <name>4-hydroxyphenylacetate</name>
        <dbReference type="ChEBI" id="CHEBI:48999"/>
    </ligand>
</feature>
<feature type="modified residue" description="Glycine radical" evidence="3">
    <location>
        <position position="877"/>
    </location>
</feature>
<reference key="1">
    <citation type="journal article" date="2009" name="Genome Biol.">
        <title>Comparative genome and phenotypic analysis of Clostridium difficile 027 strains provides insight into the evolution of a hypervirulent bacterium.</title>
        <authorList>
            <person name="Stabler R.A."/>
            <person name="He M."/>
            <person name="Dawson L."/>
            <person name="Martin M."/>
            <person name="Valiente E."/>
            <person name="Corton C."/>
            <person name="Lawley T.D."/>
            <person name="Sebaihia M."/>
            <person name="Quail M.A."/>
            <person name="Rose G."/>
            <person name="Gerding D.N."/>
            <person name="Gibert M."/>
            <person name="Popoff M.R."/>
            <person name="Parkhill J."/>
            <person name="Dougan G."/>
            <person name="Wren B.W."/>
        </authorList>
    </citation>
    <scope>NUCLEOTIDE SEQUENCE [LARGE SCALE GENOMIC DNA]</scope>
    <source>
        <strain>CD196</strain>
    </source>
</reference>
<dbReference type="EC" id="4.1.1.83" evidence="1"/>
<dbReference type="EMBL" id="FN538970">
    <property type="protein sequence ID" value="CBA60343.1"/>
    <property type="molecule type" value="Genomic_DNA"/>
</dbReference>
<dbReference type="RefSeq" id="WP_009892575.1">
    <property type="nucleotide sequence ID" value="NZ_CP059592.1"/>
</dbReference>
<dbReference type="SMR" id="C9XIS5"/>
<dbReference type="KEGG" id="cdc:CD196_0165"/>
<dbReference type="HOGENOM" id="CLU_009096_0_1_9"/>
<dbReference type="Proteomes" id="UP000002068">
    <property type="component" value="Chromosome"/>
</dbReference>
<dbReference type="GO" id="GO:0005829">
    <property type="term" value="C:cytosol"/>
    <property type="evidence" value="ECO:0007669"/>
    <property type="project" value="TreeGrafter"/>
</dbReference>
<dbReference type="GO" id="GO:0043722">
    <property type="term" value="F:4-hydroxyphenylacetate decarboxylase activity"/>
    <property type="evidence" value="ECO:0007669"/>
    <property type="project" value="UniProtKB-EC"/>
</dbReference>
<dbReference type="Gene3D" id="3.20.70.20">
    <property type="match status" value="1"/>
</dbReference>
<dbReference type="InterPro" id="IPR001150">
    <property type="entry name" value="Gly_radical"/>
</dbReference>
<dbReference type="InterPro" id="IPR051215">
    <property type="entry name" value="GRE"/>
</dbReference>
<dbReference type="InterPro" id="IPR004184">
    <property type="entry name" value="PFL_dom"/>
</dbReference>
<dbReference type="NCBIfam" id="NF033715">
    <property type="entry name" value="glycyl_HPDL_Lrg"/>
    <property type="match status" value="1"/>
</dbReference>
<dbReference type="PANTHER" id="PTHR43641:SF2">
    <property type="entry name" value="DEHYDRATASE YBIW-RELATED"/>
    <property type="match status" value="1"/>
</dbReference>
<dbReference type="PANTHER" id="PTHR43641">
    <property type="entry name" value="FORMATE ACETYLTRANSFERASE 3-RELATED"/>
    <property type="match status" value="1"/>
</dbReference>
<dbReference type="Pfam" id="PF01228">
    <property type="entry name" value="Gly_radical"/>
    <property type="match status" value="1"/>
</dbReference>
<dbReference type="Pfam" id="PF02901">
    <property type="entry name" value="PFL-like"/>
    <property type="match status" value="1"/>
</dbReference>
<dbReference type="SUPFAM" id="SSF51998">
    <property type="entry name" value="PFL-like glycyl radical enzymes"/>
    <property type="match status" value="1"/>
</dbReference>
<dbReference type="PROSITE" id="PS51149">
    <property type="entry name" value="GLY_RADICAL_2"/>
    <property type="match status" value="1"/>
</dbReference>
<dbReference type="PROSITE" id="PS51554">
    <property type="entry name" value="PFL"/>
    <property type="match status" value="1"/>
</dbReference>
<protein>
    <recommendedName>
        <fullName evidence="1">4-hydroxyphenylacetate decarboxylase glycyl radical subunit</fullName>
        <shortName evidence="1">HPA decarboxylase glycyl radical subunit</shortName>
        <ecNumber evidence="1">4.1.1.83</ecNumber>
    </recommendedName>
    <alternativeName>
        <fullName evidence="1">4-hydroxyphenylacetate decarboxylase catalytic beta subunit</fullName>
    </alternativeName>
    <alternativeName>
        <fullName evidence="1">4-hydroxyphenylacetate decarboxylase large subunit</fullName>
    </alternativeName>
    <alternativeName>
        <fullName evidence="1">p-hydroxyphenylacetate decarboxylase large subunit</fullName>
    </alternativeName>
</protein>
<keyword id="KW-0456">Lyase</keyword>
<keyword id="KW-0556">Organic radical</keyword>
<keyword id="KW-0597">Phosphoprotein</keyword>